<comment type="function">
    <text>Plays an essential role in the utilization of numerous aromatic and hydroaromatic compounds via the beta-ketoadipate pathway.</text>
</comment>
<comment type="catalytic activity">
    <reaction>
        <text>3,4-dihydroxybenzoate + O2 = 3-carboxy-cis,cis-muconate + 2 H(+)</text>
        <dbReference type="Rhea" id="RHEA:10084"/>
        <dbReference type="ChEBI" id="CHEBI:15378"/>
        <dbReference type="ChEBI" id="CHEBI:15379"/>
        <dbReference type="ChEBI" id="CHEBI:36241"/>
        <dbReference type="ChEBI" id="CHEBI:57496"/>
        <dbReference type="EC" id="1.13.11.3"/>
    </reaction>
</comment>
<comment type="cofactor">
    <cofactor>
        <name>Fe(3+)</name>
        <dbReference type="ChEBI" id="CHEBI:29034"/>
    </cofactor>
    <text>Binds Fe(3+) ion per subunit.</text>
</comment>
<comment type="pathway">
    <text>Aromatic compound metabolism; beta-ketoadipate pathway; 3-carboxy-cis,cis-muconate from 3,4-dihydroxybenzoate: step 1/1.</text>
</comment>
<comment type="subunit">
    <text>The enzyme is an oligomer of 12 copies of the alpha and beta chains.</text>
</comment>
<comment type="similarity">
    <text evidence="3">Belongs to the intradiol ring-cleavage dioxygenase family.</text>
</comment>
<comment type="caution">
    <text evidence="3">Strain ATCC 23975 was originally classified as being from Pseudomonas aeruginosa.</text>
</comment>
<dbReference type="EC" id="1.13.11.3"/>
<dbReference type="EMBL" id="L14836">
    <property type="protein sequence ID" value="AAB41025.1"/>
    <property type="molecule type" value="Genomic_DNA"/>
</dbReference>
<dbReference type="PIR" id="B36930">
    <property type="entry name" value="DAPSAA"/>
</dbReference>
<dbReference type="RefSeq" id="WP_003251601.1">
    <property type="nucleotide sequence ID" value="NZ_WOWR01000009.1"/>
</dbReference>
<dbReference type="PDB" id="1YKK">
    <property type="method" value="X-ray"/>
    <property type="resolution" value="2.06 A"/>
    <property type="chains" value="A/C/E/G/I/K=2-201"/>
</dbReference>
<dbReference type="PDB" id="1YKL">
    <property type="method" value="X-ray"/>
    <property type="resolution" value="2.25 A"/>
    <property type="chains" value="A/C/E/G/I/K=2-201"/>
</dbReference>
<dbReference type="PDB" id="1YKM">
    <property type="method" value="X-ray"/>
    <property type="resolution" value="2.22 A"/>
    <property type="chains" value="A/C/E/G/I/K=2-201"/>
</dbReference>
<dbReference type="PDB" id="1YKN">
    <property type="method" value="X-ray"/>
    <property type="resolution" value="2.06 A"/>
    <property type="chains" value="A/C/E/G/I/K=2-201"/>
</dbReference>
<dbReference type="PDB" id="1YKO">
    <property type="method" value="X-ray"/>
    <property type="resolution" value="2.54 A"/>
    <property type="chains" value="A/C/E/G/I/K=2-201"/>
</dbReference>
<dbReference type="PDB" id="1YKP">
    <property type="method" value="X-ray"/>
    <property type="resolution" value="2.41 A"/>
    <property type="chains" value="A/C/E/G/I/K=2-201"/>
</dbReference>
<dbReference type="PDB" id="2PCD">
    <property type="method" value="X-ray"/>
    <property type="resolution" value="2.15 A"/>
    <property type="chains" value="A/B/C/D/E/F=2-201"/>
</dbReference>
<dbReference type="PDB" id="3LKT">
    <property type="method" value="X-ray"/>
    <property type="resolution" value="1.65 A"/>
    <property type="chains" value="A/B/C/D/E/F=2-201"/>
</dbReference>
<dbReference type="PDB" id="3LMX">
    <property type="method" value="X-ray"/>
    <property type="resolution" value="2.20 A"/>
    <property type="chains" value="A/B/C=2-201"/>
</dbReference>
<dbReference type="PDB" id="3LXV">
    <property type="method" value="X-ray"/>
    <property type="resolution" value="1.90 A"/>
    <property type="chains" value="A/B/C=2-201"/>
</dbReference>
<dbReference type="PDB" id="3MFL">
    <property type="method" value="X-ray"/>
    <property type="resolution" value="1.78 A"/>
    <property type="chains" value="A/B/C=2-201"/>
</dbReference>
<dbReference type="PDB" id="3MI1">
    <property type="method" value="X-ray"/>
    <property type="resolution" value="1.74 A"/>
    <property type="chains" value="A/B/C=2-201"/>
</dbReference>
<dbReference type="PDB" id="3MI5">
    <property type="method" value="X-ray"/>
    <property type="resolution" value="1.78 A"/>
    <property type="chains" value="A/B/C/D/E/F=2-201"/>
</dbReference>
<dbReference type="PDB" id="3MV4">
    <property type="method" value="X-ray"/>
    <property type="resolution" value="1.59 A"/>
    <property type="chains" value="A/B/C=2-201"/>
</dbReference>
<dbReference type="PDB" id="3MV6">
    <property type="method" value="X-ray"/>
    <property type="resolution" value="1.86 A"/>
    <property type="chains" value="A/B/C=2-201"/>
</dbReference>
<dbReference type="PDB" id="3PCA">
    <property type="method" value="X-ray"/>
    <property type="resolution" value="2.20 A"/>
    <property type="chains" value="A/B/C/D/E/F=2-201"/>
</dbReference>
<dbReference type="PDB" id="3PCB">
    <property type="method" value="X-ray"/>
    <property type="resolution" value="2.19 A"/>
    <property type="chains" value="A/B/C/D/E/F=2-201"/>
</dbReference>
<dbReference type="PDB" id="3PCC">
    <property type="method" value="X-ray"/>
    <property type="resolution" value="1.98 A"/>
    <property type="chains" value="A/B/C/D/E/F=2-201"/>
</dbReference>
<dbReference type="PDB" id="3PCD">
    <property type="method" value="X-ray"/>
    <property type="resolution" value="2.10 A"/>
    <property type="chains" value="A/B/C/D/E/F=2-201"/>
</dbReference>
<dbReference type="PDB" id="3PCE">
    <property type="method" value="X-ray"/>
    <property type="resolution" value="2.06 A"/>
    <property type="chains" value="A/B/C/D/E/F=2-201"/>
</dbReference>
<dbReference type="PDB" id="3PCF">
    <property type="method" value="X-ray"/>
    <property type="resolution" value="2.15 A"/>
    <property type="chains" value="A/B/C/D/E/F=2-201"/>
</dbReference>
<dbReference type="PDB" id="3PCG">
    <property type="method" value="X-ray"/>
    <property type="resolution" value="1.96 A"/>
    <property type="chains" value="A/B/C/D/E/F=2-201"/>
</dbReference>
<dbReference type="PDB" id="3PCH">
    <property type="method" value="X-ray"/>
    <property type="resolution" value="2.05 A"/>
    <property type="chains" value="A/B/C/D/E/F=2-201"/>
</dbReference>
<dbReference type="PDB" id="3PCI">
    <property type="method" value="X-ray"/>
    <property type="resolution" value="2.21 A"/>
    <property type="chains" value="A/B/C/D/E/F=2-201"/>
</dbReference>
<dbReference type="PDB" id="3PCJ">
    <property type="method" value="X-ray"/>
    <property type="resolution" value="2.13 A"/>
    <property type="chains" value="A/B/C/D/E/F=2-201"/>
</dbReference>
<dbReference type="PDB" id="3PCK">
    <property type="method" value="X-ray"/>
    <property type="resolution" value="2.13 A"/>
    <property type="chains" value="A/B/C/D/E/F=2-201"/>
</dbReference>
<dbReference type="PDB" id="3PCL">
    <property type="method" value="X-ray"/>
    <property type="resolution" value="2.15 A"/>
    <property type="chains" value="A/B/C/D/E/F=2-201"/>
</dbReference>
<dbReference type="PDB" id="3PCM">
    <property type="method" value="X-ray"/>
    <property type="resolution" value="2.25 A"/>
    <property type="chains" value="A/B/C/D/E/F=2-201"/>
</dbReference>
<dbReference type="PDB" id="3PCN">
    <property type="method" value="X-ray"/>
    <property type="resolution" value="2.40 A"/>
    <property type="chains" value="A/B/C/D/E/F=2-201"/>
</dbReference>
<dbReference type="PDB" id="3T63">
    <property type="method" value="X-ray"/>
    <property type="resolution" value="1.54 A"/>
    <property type="chains" value="A/B/C=2-201"/>
</dbReference>
<dbReference type="PDB" id="3T67">
    <property type="method" value="X-ray"/>
    <property type="resolution" value="1.67 A"/>
    <property type="chains" value="A/B/C=2-201"/>
</dbReference>
<dbReference type="PDB" id="4WHO">
    <property type="method" value="X-ray"/>
    <property type="resolution" value="1.83 A"/>
    <property type="chains" value="A/C/E=2-201"/>
</dbReference>
<dbReference type="PDB" id="4WHP">
    <property type="method" value="X-ray"/>
    <property type="resolution" value="1.54 A"/>
    <property type="chains" value="A/C/E=2-201"/>
</dbReference>
<dbReference type="PDB" id="4WHQ">
    <property type="method" value="X-ray"/>
    <property type="resolution" value="1.78 A"/>
    <property type="chains" value="A/C/E=2-201"/>
</dbReference>
<dbReference type="PDB" id="4WHR">
    <property type="method" value="X-ray"/>
    <property type="resolution" value="1.58 A"/>
    <property type="chains" value="A/C/E=2-201"/>
</dbReference>
<dbReference type="PDB" id="4WHS">
    <property type="method" value="X-ray"/>
    <property type="resolution" value="1.35 A"/>
    <property type="chains" value="A/C/E=2-201"/>
</dbReference>
<dbReference type="PDBsum" id="1YKK"/>
<dbReference type="PDBsum" id="1YKL"/>
<dbReference type="PDBsum" id="1YKM"/>
<dbReference type="PDBsum" id="1YKN"/>
<dbReference type="PDBsum" id="1YKO"/>
<dbReference type="PDBsum" id="1YKP"/>
<dbReference type="PDBsum" id="2PCD"/>
<dbReference type="PDBsum" id="3LKT"/>
<dbReference type="PDBsum" id="3LMX"/>
<dbReference type="PDBsum" id="3LXV"/>
<dbReference type="PDBsum" id="3MFL"/>
<dbReference type="PDBsum" id="3MI1"/>
<dbReference type="PDBsum" id="3MI5"/>
<dbReference type="PDBsum" id="3MV4"/>
<dbReference type="PDBsum" id="3MV6"/>
<dbReference type="PDBsum" id="3PCA"/>
<dbReference type="PDBsum" id="3PCB"/>
<dbReference type="PDBsum" id="3PCC"/>
<dbReference type="PDBsum" id="3PCD"/>
<dbReference type="PDBsum" id="3PCE"/>
<dbReference type="PDBsum" id="3PCF"/>
<dbReference type="PDBsum" id="3PCG"/>
<dbReference type="PDBsum" id="3PCH"/>
<dbReference type="PDBsum" id="3PCI"/>
<dbReference type="PDBsum" id="3PCJ"/>
<dbReference type="PDBsum" id="3PCK"/>
<dbReference type="PDBsum" id="3PCL"/>
<dbReference type="PDBsum" id="3PCM"/>
<dbReference type="PDBsum" id="3PCN"/>
<dbReference type="PDBsum" id="3T63"/>
<dbReference type="PDBsum" id="3T67"/>
<dbReference type="PDBsum" id="4WHO"/>
<dbReference type="PDBsum" id="4WHP"/>
<dbReference type="PDBsum" id="4WHQ"/>
<dbReference type="PDBsum" id="4WHR"/>
<dbReference type="PDBsum" id="4WHS"/>
<dbReference type="SMR" id="P00436"/>
<dbReference type="IntAct" id="P00436">
    <property type="interactions" value="1"/>
</dbReference>
<dbReference type="DrugBank" id="DB01702">
    <property type="generic name" value="2-(3,4-Dihydroxyphenyl)Acetic Acid"/>
</dbReference>
<dbReference type="GeneID" id="45522229"/>
<dbReference type="eggNOG" id="COG3485">
    <property type="taxonomic scope" value="Bacteria"/>
</dbReference>
<dbReference type="OrthoDB" id="9805815at2"/>
<dbReference type="BioCyc" id="MetaCyc:MONOMER-3186"/>
<dbReference type="UniPathway" id="UPA00157">
    <property type="reaction ID" value="UER00264"/>
</dbReference>
<dbReference type="EvolutionaryTrace" id="P00436"/>
<dbReference type="GO" id="GO:0008199">
    <property type="term" value="F:ferric iron binding"/>
    <property type="evidence" value="ECO:0007669"/>
    <property type="project" value="InterPro"/>
</dbReference>
<dbReference type="GO" id="GO:0018578">
    <property type="term" value="F:protocatechuate 3,4-dioxygenase activity"/>
    <property type="evidence" value="ECO:0007669"/>
    <property type="project" value="UniProtKB-EC"/>
</dbReference>
<dbReference type="GO" id="GO:0042952">
    <property type="term" value="P:beta-ketoadipate pathway"/>
    <property type="evidence" value="ECO:0007669"/>
    <property type="project" value="UniProtKB-UniPathway"/>
</dbReference>
<dbReference type="CDD" id="cd03463">
    <property type="entry name" value="3_4-PCD_alpha"/>
    <property type="match status" value="1"/>
</dbReference>
<dbReference type="FunFam" id="2.60.130.10:FF:000001">
    <property type="entry name" value="Protocatechuate 3,4-dioxygenase alpha chain"/>
    <property type="match status" value="1"/>
</dbReference>
<dbReference type="Gene3D" id="2.60.130.10">
    <property type="entry name" value="Aromatic compound dioxygenase"/>
    <property type="match status" value="1"/>
</dbReference>
<dbReference type="InterPro" id="IPR000627">
    <property type="entry name" value="Intradiol_dOase_C"/>
</dbReference>
<dbReference type="InterPro" id="IPR015889">
    <property type="entry name" value="Intradiol_dOase_core"/>
</dbReference>
<dbReference type="InterPro" id="IPR050770">
    <property type="entry name" value="Intradiol_RC_Dioxygenase"/>
</dbReference>
<dbReference type="InterPro" id="IPR012786">
    <property type="entry name" value="Protocat_dOase_a"/>
</dbReference>
<dbReference type="NCBIfam" id="TIGR02423">
    <property type="entry name" value="protocat_alph"/>
    <property type="match status" value="1"/>
</dbReference>
<dbReference type="PANTHER" id="PTHR33711">
    <property type="entry name" value="DIOXYGENASE, PUTATIVE (AFU_ORTHOLOGUE AFUA_2G02910)-RELATED"/>
    <property type="match status" value="1"/>
</dbReference>
<dbReference type="PANTHER" id="PTHR33711:SF9">
    <property type="entry name" value="PROTOCATECHUATE 3,4-DIOXYGENASE ALPHA CHAIN"/>
    <property type="match status" value="1"/>
</dbReference>
<dbReference type="Pfam" id="PF00775">
    <property type="entry name" value="Dioxygenase_C"/>
    <property type="match status" value="1"/>
</dbReference>
<dbReference type="SUPFAM" id="SSF49482">
    <property type="entry name" value="Aromatic compound dioxygenase"/>
    <property type="match status" value="1"/>
</dbReference>
<dbReference type="PROSITE" id="PS00083">
    <property type="entry name" value="INTRADIOL_DIOXYGENAS"/>
    <property type="match status" value="1"/>
</dbReference>
<name>PCXA_PSEPU</name>
<gene>
    <name type="primary">pcaG</name>
</gene>
<keyword id="KW-0002">3D-structure</keyword>
<keyword id="KW-0058">Aromatic hydrocarbons catabolism</keyword>
<keyword id="KW-0223">Dioxygenase</keyword>
<keyword id="KW-0903">Direct protein sequencing</keyword>
<keyword id="KW-0408">Iron</keyword>
<keyword id="KW-0560">Oxidoreductase</keyword>
<protein>
    <recommendedName>
        <fullName>Protocatechuate 3,4-dioxygenase alpha chain</fullName>
        <ecNumber>1.13.11.3</ecNumber>
    </recommendedName>
    <alternativeName>
        <fullName>3,4-PCD</fullName>
    </alternativeName>
</protein>
<evidence type="ECO:0000255" key="1"/>
<evidence type="ECO:0000269" key="2">
    <source>
    </source>
</evidence>
<evidence type="ECO:0000305" key="3"/>
<evidence type="ECO:0007829" key="4">
    <source>
        <dbReference type="PDB" id="4WHS"/>
    </source>
</evidence>
<proteinExistence type="evidence at protein level"/>
<feature type="initiator methionine" description="Removed" evidence="2">
    <location>
        <position position="1"/>
    </location>
</feature>
<feature type="chain" id="PRO_0000085095" description="Protocatechuate 3,4-dioxygenase alpha chain">
    <location>
        <begin position="2"/>
        <end position="201"/>
    </location>
</feature>
<feature type="binding site" evidence="1">
    <location>
        <position position="134"/>
    </location>
    <ligand>
        <name>3,4-dihydroxybenzoate</name>
        <dbReference type="ChEBI" id="CHEBI:36241"/>
    </ligand>
</feature>
<feature type="sequence conflict" description="In Ref. 2; AA sequence." evidence="3" ref="2">
    <original>N</original>
    <variation>D</variation>
    <location>
        <position position="60"/>
    </location>
</feature>
<feature type="sequence conflict" description="In Ref. 2; AA sequence." evidence="3" ref="2">
    <original>N</original>
    <variation>D</variation>
    <location>
        <position position="77"/>
    </location>
</feature>
<feature type="helix" evidence="4">
    <location>
        <begin position="18"/>
        <end position="22"/>
    </location>
</feature>
<feature type="helix" evidence="4">
    <location>
        <begin position="24"/>
        <end position="27"/>
    </location>
</feature>
<feature type="strand" evidence="4">
    <location>
        <begin position="45"/>
        <end position="47"/>
    </location>
</feature>
<feature type="strand" evidence="4">
    <location>
        <begin position="49"/>
        <end position="57"/>
    </location>
</feature>
<feature type="strand" evidence="4">
    <location>
        <begin position="68"/>
        <end position="72"/>
    </location>
</feature>
<feature type="strand" evidence="4">
    <location>
        <begin position="88"/>
        <end position="90"/>
    </location>
</feature>
<feature type="strand" evidence="4">
    <location>
        <begin position="92"/>
        <end position="97"/>
    </location>
</feature>
<feature type="turn" evidence="4">
    <location>
        <begin position="100"/>
        <end position="102"/>
    </location>
</feature>
<feature type="strand" evidence="4">
    <location>
        <begin position="104"/>
        <end position="110"/>
    </location>
</feature>
<feature type="strand" evidence="4">
    <location>
        <begin position="127"/>
        <end position="132"/>
    </location>
</feature>
<feature type="strand" evidence="4">
    <location>
        <begin position="140"/>
        <end position="146"/>
    </location>
</feature>
<feature type="helix" evidence="4">
    <location>
        <begin position="147"/>
        <end position="149"/>
    </location>
</feature>
<feature type="helix" evidence="4">
    <location>
        <begin position="150"/>
        <end position="154"/>
    </location>
</feature>
<feature type="helix" evidence="4">
    <location>
        <begin position="159"/>
        <end position="161"/>
    </location>
</feature>
<feature type="strand" evidence="4">
    <location>
        <begin position="162"/>
        <end position="164"/>
    </location>
</feature>
<feature type="helix" evidence="4">
    <location>
        <begin position="165"/>
        <end position="168"/>
    </location>
</feature>
<feature type="helix" evidence="4">
    <location>
        <begin position="169"/>
        <end position="171"/>
    </location>
</feature>
<feature type="strand" evidence="4">
    <location>
        <begin position="172"/>
        <end position="178"/>
    </location>
</feature>
<feature type="strand" evidence="4">
    <location>
        <begin position="181"/>
        <end position="185"/>
    </location>
</feature>
<sequence length="201" mass="22387">MPIELLPETPSQTAGPYVHIGLALEAAGNPTRDQEIWNRLAKPDAPGEHILLLGQVYDGNGHLVRDSFLEVWQADANGEYQDAYNLENAFNSFGRTATTFDAGEWTLHTVKPGVVNNAAGVPMAPHINISLFARGINIHLHTRLYFDDEAQANAKCPVLNLIEQPQRRETLIAKRCEVDGKTAYRFDIRIQGEGETVFFDF</sequence>
<accession>P00436</accession>
<organism>
    <name type="scientific">Pseudomonas putida</name>
    <name type="common">Arthrobacter siderocapsulatus</name>
    <dbReference type="NCBI Taxonomy" id="303"/>
    <lineage>
        <taxon>Bacteria</taxon>
        <taxon>Pseudomonadati</taxon>
        <taxon>Pseudomonadota</taxon>
        <taxon>Gammaproteobacteria</taxon>
        <taxon>Pseudomonadales</taxon>
        <taxon>Pseudomonadaceae</taxon>
        <taxon>Pseudomonas</taxon>
    </lineage>
</organism>
<reference key="1">
    <citation type="journal article" date="1993" name="J. Bacteriol.">
        <title>Cloning, sequencing, and expression of the Pseudomonas putida protocatechuate 3,4-dioxygenase genes.</title>
        <authorList>
            <person name="Frazee R.W."/>
            <person name="Livingston D.M."/>
            <person name="Laporte D.C."/>
            <person name="Lipscomb J.D."/>
        </authorList>
    </citation>
    <scope>NUCLEOTIDE SEQUENCE [GENOMIC DNA]</scope>
    <source>
        <strain>ATCC 23975 / NCIMB 12602 / B-10 / Biotype A</strain>
    </source>
</reference>
<reference key="2">
    <citation type="journal article" date="1979" name="J. Biol. Chem.">
        <title>The primary structure of the alpha subunit of protocatechuate 3,4-dioxygenase. II. Isolation and sequence of overlap peptides and complete sequence.</title>
        <authorList>
            <person name="Kohlmiller N.A."/>
            <person name="Howard J.B."/>
        </authorList>
    </citation>
    <scope>PROTEIN SEQUENCE OF 2-201</scope>
    <source>
        <strain>ATCC 23975 / NCIMB 12602 / B-10 / Biotype A</strain>
    </source>
</reference>
<reference key="3">
    <citation type="journal article" date="1988" name="Nature">
        <title>Structure and assembly of protocatechuate 3,4-dioxygenase.</title>
        <authorList>
            <person name="Ohlendorf D.H."/>
            <person name="Lipscomb J.D."/>
            <person name="Weber P.C."/>
        </authorList>
    </citation>
    <scope>X-RAY CRYSTALLOGRAPHY (2.8 ANGSTROMS)</scope>
</reference>
<reference key="4">
    <citation type="journal article" date="1994" name="J. Mol. Biol.">
        <title>Structure of protocatechuate 3,4-dioxygenase from Pseudomonas aeruginosa at 2.15-A resolution.</title>
        <authorList>
            <person name="Ohlendorf D.H."/>
            <person name="Orville A.M."/>
            <person name="Lipscomb J.D."/>
        </authorList>
    </citation>
    <scope>X-RAY CRYSTALLOGRAPHY (2.15 ANGSTROMS)</scope>
    <source>
        <strain>ATCC 23975 / NCIMB 12602 / B-10 / Biotype A</strain>
    </source>
</reference>
<reference key="5">
    <citation type="journal article" date="1997" name="Biochemistry">
        <title>Structures of competitive inhibitor complexes of protocatechuate 3,4-dioxygenase: multiple exogenous ligand binding orientations within the active site.</title>
        <authorList>
            <person name="Orville A.M."/>
            <person name="Elango N."/>
            <person name="Lipscomb J.D."/>
            <person name="Ohlendorf D.H."/>
        </authorList>
    </citation>
    <scope>X-RAY CRYSTALLOGRAPHY (2.15 ANGSTROMS)</scope>
    <source>
        <strain>ATCC 23975 / NCIMB 12602 / B-10 / Biotype A</strain>
    </source>
</reference>
<reference key="6">
    <citation type="journal article" date="1997" name="Biochemistry">
        <title>Crystal structures of substrate and substrate analog complexes of protocatechuate 3,4-dioxygenase: endogenous Fe3+ ligand displacement in response to substrate binding.</title>
        <authorList>
            <person name="Orville A.M."/>
            <person name="Lipscomb J.D."/>
            <person name="Ohlendorf D.H."/>
        </authorList>
    </citation>
    <scope>X-RAY CRYSTALLOGRAPHY (2.13 ANGSTROMS)</scope>
    <source>
        <strain>ATCC 23975 / NCIMB 12602 / B-10 / Biotype A</strain>
    </source>
</reference>
<reference key="7">
    <citation type="journal article" date="1997" name="Biochemistry">
        <title>Crystal structure and resonance Raman studies of protocatechuate 3,4-dioxygenase complexed with 3,4-dihydroxyphenylacetate.</title>
        <authorList>
            <person name="Elgren T.E."/>
            <person name="Orville A.M."/>
            <person name="Kelly K.A."/>
            <person name="Lipscomb J.D."/>
            <person name="Ohlendorf D.H."/>
            <person name="Que L. Jr."/>
        </authorList>
    </citation>
    <scope>X-RAY CRYSTALLOGRAPHY (2.4 ANGSTROMS)</scope>
    <source>
        <strain>ATCC 23975 / NCIMB 12602 / B-10 / Biotype A</strain>
    </source>
</reference>